<feature type="chain" id="PRO_0000050396" description="High-affinity hexose transporter HXT6">
    <location>
        <begin position="1"/>
        <end position="570"/>
    </location>
</feature>
<feature type="topological domain" description="Cytoplasmic" evidence="1">
    <location>
        <begin position="1"/>
        <end position="60"/>
    </location>
</feature>
<feature type="transmembrane region" description="Helical; Name=1" evidence="1">
    <location>
        <begin position="61"/>
        <end position="81"/>
    </location>
</feature>
<feature type="topological domain" description="Extracellular" evidence="1">
    <location>
        <begin position="82"/>
        <end position="116"/>
    </location>
</feature>
<feature type="transmembrane region" description="Helical; Name=2" evidence="1">
    <location>
        <begin position="117"/>
        <end position="137"/>
    </location>
</feature>
<feature type="topological domain" description="Cytoplasmic" evidence="1">
    <location>
        <begin position="138"/>
        <end position="143"/>
    </location>
</feature>
<feature type="transmembrane region" description="Helical; Name=3" evidence="1">
    <location>
        <begin position="144"/>
        <end position="164"/>
    </location>
</feature>
<feature type="topological domain" description="Extracellular" evidence="1">
    <location>
        <begin position="165"/>
        <end position="174"/>
    </location>
</feature>
<feature type="transmembrane region" description="Helical; Name=4" evidence="1">
    <location>
        <begin position="175"/>
        <end position="195"/>
    </location>
</feature>
<feature type="topological domain" description="Cytoplasmic" evidence="1">
    <location>
        <begin position="196"/>
        <end position="201"/>
    </location>
</feature>
<feature type="transmembrane region" description="Helical; Name=5" evidence="1">
    <location>
        <begin position="202"/>
        <end position="222"/>
    </location>
</feature>
<feature type="topological domain" description="Extracellular" evidence="1">
    <location>
        <begin position="223"/>
        <end position="236"/>
    </location>
</feature>
<feature type="transmembrane region" description="Helical; Name=6" evidence="1">
    <location>
        <begin position="237"/>
        <end position="257"/>
    </location>
</feature>
<feature type="topological domain" description="Cytoplasmic" evidence="1">
    <location>
        <begin position="258"/>
        <end position="340"/>
    </location>
</feature>
<feature type="transmembrane region" description="Helical; Name=7" evidence="1">
    <location>
        <begin position="341"/>
        <end position="357"/>
    </location>
</feature>
<feature type="topological domain" description="Extracellular" evidence="1">
    <location>
        <begin position="358"/>
        <end position="363"/>
    </location>
</feature>
<feature type="transmembrane region" description="Helical; Name=8" evidence="1">
    <location>
        <begin position="364"/>
        <end position="381"/>
    </location>
</feature>
<feature type="topological domain" description="Cytoplasmic" evidence="1">
    <location>
        <begin position="382"/>
        <end position="388"/>
    </location>
</feature>
<feature type="transmembrane region" description="Helical; Name=9" evidence="1">
    <location>
        <begin position="389"/>
        <end position="409"/>
    </location>
</feature>
<feature type="topological domain" description="Extracellular" evidence="1">
    <location>
        <begin position="410"/>
        <end position="431"/>
    </location>
</feature>
<feature type="transmembrane region" description="Helical; Name=10" evidence="1">
    <location>
        <begin position="432"/>
        <end position="452"/>
    </location>
</feature>
<feature type="topological domain" description="Cytoplasmic" evidence="1">
    <location>
        <begin position="453"/>
        <end position="469"/>
    </location>
</feature>
<feature type="transmembrane region" description="Helical; Name=11" evidence="1">
    <location>
        <begin position="470"/>
        <end position="490"/>
    </location>
</feature>
<feature type="topological domain" description="Extracellular" evidence="1">
    <location>
        <position position="491"/>
    </location>
</feature>
<feature type="transmembrane region" description="Helical; Name=12" evidence="1">
    <location>
        <begin position="492"/>
        <end position="512"/>
    </location>
</feature>
<feature type="topological domain" description="Cytoplasmic" evidence="1">
    <location>
        <begin position="513"/>
        <end position="570"/>
    </location>
</feature>
<feature type="glycosylation site" description="N-linked (GlcNAc...) asparagine" evidence="1">
    <location>
        <position position="91"/>
    </location>
</feature>
<feature type="glycosylation site" description="N-linked (GlcNAc...) asparagine" evidence="1">
    <location>
        <position position="228"/>
    </location>
</feature>
<feature type="cross-link" description="Glycyl lysine isopeptide (Lys-Gly) (interchain with G-Cter in ubiquitin)" evidence="2">
    <location>
        <position position="560"/>
    </location>
</feature>
<feature type="sequence conflict" description="In Ref. 1; CAA83496." evidence="3" ref="1">
    <original>V</original>
    <variation>I</variation>
    <location>
        <position position="293"/>
    </location>
</feature>
<reference key="1">
    <citation type="journal article" date="1995" name="Mol. Microbiol.">
        <title>Identification of novel HXT genes in Saccharomyces cerevisiae reveals the impact of individual hexose transporters on glycolytic flux.</title>
        <authorList>
            <person name="Reifenberger E."/>
            <person name="Ciriacy M."/>
        </authorList>
    </citation>
    <scope>NUCLEOTIDE SEQUENCE [GENOMIC DNA]</scope>
    <source>
        <strain>MC996</strain>
    </source>
</reference>
<reference key="2">
    <citation type="journal article" date="1997" name="Nature">
        <title>The nucleotide sequence of Saccharomyces cerevisiae chromosome IV.</title>
        <authorList>
            <person name="Jacq C."/>
            <person name="Alt-Moerbe J."/>
            <person name="Andre B."/>
            <person name="Arnold W."/>
            <person name="Bahr A."/>
            <person name="Ballesta J.P.G."/>
            <person name="Bargues M."/>
            <person name="Baron L."/>
            <person name="Becker A."/>
            <person name="Biteau N."/>
            <person name="Bloecker H."/>
            <person name="Blugeon C."/>
            <person name="Boskovic J."/>
            <person name="Brandt P."/>
            <person name="Brueckner M."/>
            <person name="Buitrago M.J."/>
            <person name="Coster F."/>
            <person name="Delaveau T."/>
            <person name="del Rey F."/>
            <person name="Dujon B."/>
            <person name="Eide L.G."/>
            <person name="Garcia-Cantalejo J.M."/>
            <person name="Goffeau A."/>
            <person name="Gomez-Peris A."/>
            <person name="Granotier C."/>
            <person name="Hanemann V."/>
            <person name="Hankeln T."/>
            <person name="Hoheisel J.D."/>
            <person name="Jaeger W."/>
            <person name="Jimenez A."/>
            <person name="Jonniaux J.-L."/>
            <person name="Kraemer C."/>
            <person name="Kuester H."/>
            <person name="Laamanen P."/>
            <person name="Legros Y."/>
            <person name="Louis E.J."/>
            <person name="Moeller-Rieker S."/>
            <person name="Monnet A."/>
            <person name="Moro M."/>
            <person name="Mueller-Auer S."/>
            <person name="Nussbaumer B."/>
            <person name="Paricio N."/>
            <person name="Paulin L."/>
            <person name="Perea J."/>
            <person name="Perez-Alonso M."/>
            <person name="Perez-Ortin J.E."/>
            <person name="Pohl T.M."/>
            <person name="Prydz H."/>
            <person name="Purnelle B."/>
            <person name="Rasmussen S.W."/>
            <person name="Remacha M.A."/>
            <person name="Revuelta J.L."/>
            <person name="Rieger M."/>
            <person name="Salom D."/>
            <person name="Saluz H.P."/>
            <person name="Saiz J.E."/>
            <person name="Saren A.-M."/>
            <person name="Schaefer M."/>
            <person name="Scharfe M."/>
            <person name="Schmidt E.R."/>
            <person name="Schneider C."/>
            <person name="Scholler P."/>
            <person name="Schwarz S."/>
            <person name="Soler-Mira A."/>
            <person name="Urrestarazu L.A."/>
            <person name="Verhasselt P."/>
            <person name="Vissers S."/>
            <person name="Voet M."/>
            <person name="Volckaert G."/>
            <person name="Wagner G."/>
            <person name="Wambutt R."/>
            <person name="Wedler E."/>
            <person name="Wedler H."/>
            <person name="Woelfl S."/>
            <person name="Harris D.E."/>
            <person name="Bowman S."/>
            <person name="Brown D."/>
            <person name="Churcher C.M."/>
            <person name="Connor R."/>
            <person name="Dedman K."/>
            <person name="Gentles S."/>
            <person name="Hamlin N."/>
            <person name="Hunt S."/>
            <person name="Jones L."/>
            <person name="McDonald S."/>
            <person name="Murphy L.D."/>
            <person name="Niblett D."/>
            <person name="Odell C."/>
            <person name="Oliver K."/>
            <person name="Rajandream M.A."/>
            <person name="Richards C."/>
            <person name="Shore L."/>
            <person name="Walsh S.V."/>
            <person name="Barrell B.G."/>
            <person name="Dietrich F.S."/>
            <person name="Mulligan J.T."/>
            <person name="Allen E."/>
            <person name="Araujo R."/>
            <person name="Aviles E."/>
            <person name="Berno A."/>
            <person name="Carpenter J."/>
            <person name="Chen E."/>
            <person name="Cherry J.M."/>
            <person name="Chung E."/>
            <person name="Duncan M."/>
            <person name="Hunicke-Smith S."/>
            <person name="Hyman R.W."/>
            <person name="Komp C."/>
            <person name="Lashkari D."/>
            <person name="Lew H."/>
            <person name="Lin D."/>
            <person name="Mosedale D."/>
            <person name="Nakahara K."/>
            <person name="Namath A."/>
            <person name="Oefner P."/>
            <person name="Oh C."/>
            <person name="Petel F.X."/>
            <person name="Roberts D."/>
            <person name="Schramm S."/>
            <person name="Schroeder M."/>
            <person name="Shogren T."/>
            <person name="Shroff N."/>
            <person name="Winant A."/>
            <person name="Yelton M.A."/>
            <person name="Botstein D."/>
            <person name="Davis R.W."/>
            <person name="Johnston M."/>
            <person name="Andrews S."/>
            <person name="Brinkman R."/>
            <person name="Cooper J."/>
            <person name="Ding H."/>
            <person name="Du Z."/>
            <person name="Favello A."/>
            <person name="Fulton L."/>
            <person name="Gattung S."/>
            <person name="Greco T."/>
            <person name="Hallsworth K."/>
            <person name="Hawkins J."/>
            <person name="Hillier L.W."/>
            <person name="Jier M."/>
            <person name="Johnson D."/>
            <person name="Johnston L."/>
            <person name="Kirsten J."/>
            <person name="Kucaba T."/>
            <person name="Langston Y."/>
            <person name="Latreille P."/>
            <person name="Le T."/>
            <person name="Mardis E."/>
            <person name="Menezes S."/>
            <person name="Miller N."/>
            <person name="Nhan M."/>
            <person name="Pauley A."/>
            <person name="Peluso D."/>
            <person name="Rifkin L."/>
            <person name="Riles L."/>
            <person name="Taich A."/>
            <person name="Trevaskis E."/>
            <person name="Vignati D."/>
            <person name="Wilcox L."/>
            <person name="Wohldman P."/>
            <person name="Vaudin M."/>
            <person name="Wilson R."/>
            <person name="Waterston R."/>
            <person name="Albermann K."/>
            <person name="Hani J."/>
            <person name="Heumann K."/>
            <person name="Kleine K."/>
            <person name="Mewes H.-W."/>
            <person name="Zollner A."/>
            <person name="Zaccaria P."/>
        </authorList>
    </citation>
    <scope>NUCLEOTIDE SEQUENCE [LARGE SCALE GENOMIC DNA]</scope>
    <source>
        <strain>ATCC 204508 / S288c</strain>
    </source>
</reference>
<reference key="3">
    <citation type="journal article" date="2014" name="G3 (Bethesda)">
        <title>The reference genome sequence of Saccharomyces cerevisiae: Then and now.</title>
        <authorList>
            <person name="Engel S.R."/>
            <person name="Dietrich F.S."/>
            <person name="Fisk D.G."/>
            <person name="Binkley G."/>
            <person name="Balakrishnan R."/>
            <person name="Costanzo M.C."/>
            <person name="Dwight S.S."/>
            <person name="Hitz B.C."/>
            <person name="Karra K."/>
            <person name="Nash R.S."/>
            <person name="Weng S."/>
            <person name="Wong E.D."/>
            <person name="Lloyd P."/>
            <person name="Skrzypek M.S."/>
            <person name="Miyasato S.R."/>
            <person name="Simison M."/>
            <person name="Cherry J.M."/>
        </authorList>
    </citation>
    <scope>GENOME REANNOTATION</scope>
    <source>
        <strain>ATCC 204508 / S288c</strain>
    </source>
</reference>
<reference key="4">
    <citation type="journal article" date="2003" name="Nat. Biotechnol.">
        <title>A proteomics approach to understanding protein ubiquitination.</title>
        <authorList>
            <person name="Peng J."/>
            <person name="Schwartz D."/>
            <person name="Elias J.E."/>
            <person name="Thoreen C.C."/>
            <person name="Cheng D."/>
            <person name="Marsischky G."/>
            <person name="Roelofs J."/>
            <person name="Finley D."/>
            <person name="Gygi S.P."/>
        </authorList>
    </citation>
    <scope>UBIQUITINATION [LARGE SCALE ANALYSIS] AT LYS-560</scope>
    <scope>IDENTIFICATION BY MASS SPECTROMETRY</scope>
    <source>
        <strain>SUB592</strain>
    </source>
</reference>
<reference key="5">
    <citation type="journal article" date="2006" name="Proc. Natl. Acad. Sci. U.S.A.">
        <title>A global topology map of the Saccharomyces cerevisiae membrane proteome.</title>
        <authorList>
            <person name="Kim H."/>
            <person name="Melen K."/>
            <person name="Oesterberg M."/>
            <person name="von Heijne G."/>
        </authorList>
    </citation>
    <scope>TOPOLOGY [LARGE SCALE ANALYSIS]</scope>
    <source>
        <strain>ATCC 208353 / W303-1A</strain>
    </source>
</reference>
<sequence length="570" mass="62705">MSQDAAIAEQTPVEHLSAVDSASHSVLSTPSNKAERDEIKAYGEGEEHEPVVEIPKRPASAYVTVSIMCIMIAFGGFVFGWDTGTISGFINQTDFIRRFGMKHKDGTNYLSKVRTGLIVSIFNIGCAIGGIILSKLGDMYGRKVGLIVVVVIYIIGIIIQIASINKWYQYFIGRIISGLGVGGIAVLSPMLISEVSPKHLRGTLVSCYQLMITAGIFLGYCTNFGTKNYSNSVQWRVPLGLCFAWALFMIGGMTFVPESPRYLAEVGKIEEAKRSIAVSNKVAVDDPSVLAEVEAVLAGVEAEKLAGNASWGELFSSKTKVLQRLIMGAMIQSLQQLTGDNYFFYYGTTIFKAVGLSDSFETSIVLGIVNFASTFVGIYVVERYGRRTCLLWGAASMTACMVVYASVGVTRLWPNGQDQPSSKGAGNCMIVFACFYIFCFATTWAPIPYVVVSETFPLRVKSKAMSIATAANWLWGFLIGFFTPFITGAINFYYGYVFMGCLVFMFFYVLLVVPETKGLTLEEVNTMWEEGVLPWKSASWVPPSRRGANYDAEEMAHDDKPLYKRMFSTK</sequence>
<protein>
    <recommendedName>
        <fullName>High-affinity hexose transporter HXT6</fullName>
    </recommendedName>
</protein>
<keyword id="KW-0325">Glycoprotein</keyword>
<keyword id="KW-1017">Isopeptide bond</keyword>
<keyword id="KW-0472">Membrane</keyword>
<keyword id="KW-1185">Reference proteome</keyword>
<keyword id="KW-0677">Repeat</keyword>
<keyword id="KW-0762">Sugar transport</keyword>
<keyword id="KW-0812">Transmembrane</keyword>
<keyword id="KW-1133">Transmembrane helix</keyword>
<keyword id="KW-0813">Transport</keyword>
<keyword id="KW-0832">Ubl conjugation</keyword>
<accession>P39003</accession>
<accession>D6VSX4</accession>
<dbReference type="EMBL" id="Z31691">
    <property type="protein sequence ID" value="CAA83496.1"/>
    <property type="molecule type" value="Genomic_DNA"/>
</dbReference>
<dbReference type="EMBL" id="U51032">
    <property type="protein sequence ID" value="AAB64779.1"/>
    <property type="molecule type" value="Genomic_DNA"/>
</dbReference>
<dbReference type="EMBL" id="BK006938">
    <property type="protein sequence ID" value="DAA12184.1"/>
    <property type="molecule type" value="Genomic_DNA"/>
</dbReference>
<dbReference type="PIR" id="S43185">
    <property type="entry name" value="S43185"/>
</dbReference>
<dbReference type="RefSeq" id="NP_010630.1">
    <property type="nucleotide sequence ID" value="NM_001180651.1"/>
</dbReference>
<dbReference type="SMR" id="P39003"/>
<dbReference type="BioGRID" id="32400">
    <property type="interactions" value="117"/>
</dbReference>
<dbReference type="DIP" id="DIP-5372N"/>
<dbReference type="FunCoup" id="P39003">
    <property type="interactions" value="1620"/>
</dbReference>
<dbReference type="IntAct" id="P39003">
    <property type="interactions" value="13"/>
</dbReference>
<dbReference type="MINT" id="P39003"/>
<dbReference type="STRING" id="4932.YDR343C"/>
<dbReference type="GlyCosmos" id="P39003">
    <property type="glycosylation" value="2 sites, No reported glycans"/>
</dbReference>
<dbReference type="GlyGen" id="P39003">
    <property type="glycosylation" value="2 sites"/>
</dbReference>
<dbReference type="iPTMnet" id="P39003"/>
<dbReference type="PaxDb" id="4932-YDR343C"/>
<dbReference type="PeptideAtlas" id="P39003"/>
<dbReference type="EnsemblFungi" id="YDR343C_mRNA">
    <property type="protein sequence ID" value="YDR343C"/>
    <property type="gene ID" value="YDR343C"/>
</dbReference>
<dbReference type="GeneID" id="851944"/>
<dbReference type="KEGG" id="sce:YDR343C"/>
<dbReference type="AGR" id="SGD:S000002751"/>
<dbReference type="SGD" id="S000002751">
    <property type="gene designation" value="HXT6"/>
</dbReference>
<dbReference type="VEuPathDB" id="FungiDB:YDR343C"/>
<dbReference type="eggNOG" id="KOG0254">
    <property type="taxonomic scope" value="Eukaryota"/>
</dbReference>
<dbReference type="GeneTree" id="ENSGT00940000176280"/>
<dbReference type="HOGENOM" id="CLU_001265_30_1_1"/>
<dbReference type="InParanoid" id="P39003"/>
<dbReference type="OMA" id="QTTVSWM"/>
<dbReference type="OrthoDB" id="5141738at2759"/>
<dbReference type="BioCyc" id="YEAST:G3O-29898-MONOMER"/>
<dbReference type="BioGRID-ORCS" id="851944">
    <property type="hits" value="0 hits in 10 CRISPR screens"/>
</dbReference>
<dbReference type="PRO" id="PR:P39003"/>
<dbReference type="Proteomes" id="UP000002311">
    <property type="component" value="Chromosome IV"/>
</dbReference>
<dbReference type="RNAct" id="P39003">
    <property type="molecule type" value="protein"/>
</dbReference>
<dbReference type="GO" id="GO:0071944">
    <property type="term" value="C:cell periphery"/>
    <property type="evidence" value="ECO:0007005"/>
    <property type="project" value="SGD"/>
</dbReference>
<dbReference type="GO" id="GO:0031966">
    <property type="term" value="C:mitochondrial membrane"/>
    <property type="evidence" value="ECO:0000315"/>
    <property type="project" value="SGD"/>
</dbReference>
<dbReference type="GO" id="GO:0005739">
    <property type="term" value="C:mitochondrion"/>
    <property type="evidence" value="ECO:0007005"/>
    <property type="project" value="SGD"/>
</dbReference>
<dbReference type="GO" id="GO:0005886">
    <property type="term" value="C:plasma membrane"/>
    <property type="evidence" value="ECO:0007005"/>
    <property type="project" value="SGD"/>
</dbReference>
<dbReference type="GO" id="GO:0005351">
    <property type="term" value="F:carbohydrate:proton symporter activity"/>
    <property type="evidence" value="ECO:0000318"/>
    <property type="project" value="GO_Central"/>
</dbReference>
<dbReference type="GO" id="GO:0055056">
    <property type="term" value="F:D-glucose transmembrane transporter activity"/>
    <property type="evidence" value="ECO:0000314"/>
    <property type="project" value="SGD"/>
</dbReference>
<dbReference type="GO" id="GO:0005353">
    <property type="term" value="F:fructose transmembrane transporter activity"/>
    <property type="evidence" value="ECO:0000304"/>
    <property type="project" value="SGD"/>
</dbReference>
<dbReference type="GO" id="GO:0015578">
    <property type="term" value="F:mannose transmembrane transporter activity"/>
    <property type="evidence" value="ECO:0000304"/>
    <property type="project" value="SGD"/>
</dbReference>
<dbReference type="GO" id="GO:0008643">
    <property type="term" value="P:carbohydrate transport"/>
    <property type="evidence" value="ECO:0000318"/>
    <property type="project" value="GO_Central"/>
</dbReference>
<dbReference type="GO" id="GO:0008645">
    <property type="term" value="P:hexose transmembrane transport"/>
    <property type="evidence" value="ECO:0000304"/>
    <property type="project" value="SGD"/>
</dbReference>
<dbReference type="GO" id="GO:0055085">
    <property type="term" value="P:transmembrane transport"/>
    <property type="evidence" value="ECO:0000304"/>
    <property type="project" value="SGD"/>
</dbReference>
<dbReference type="CDD" id="cd17356">
    <property type="entry name" value="MFS_HXT"/>
    <property type="match status" value="1"/>
</dbReference>
<dbReference type="FunFam" id="1.20.1250.20:FF:000044">
    <property type="entry name" value="Hexose transporter Hxt3p"/>
    <property type="match status" value="1"/>
</dbReference>
<dbReference type="Gene3D" id="1.20.1250.20">
    <property type="entry name" value="MFS general substrate transporter like domains"/>
    <property type="match status" value="1"/>
</dbReference>
<dbReference type="InterPro" id="IPR020846">
    <property type="entry name" value="MFS_dom"/>
</dbReference>
<dbReference type="InterPro" id="IPR005828">
    <property type="entry name" value="MFS_sugar_transport-like"/>
</dbReference>
<dbReference type="InterPro" id="IPR050360">
    <property type="entry name" value="MFS_Sugar_Transporters"/>
</dbReference>
<dbReference type="InterPro" id="IPR036259">
    <property type="entry name" value="MFS_trans_sf"/>
</dbReference>
<dbReference type="InterPro" id="IPR003663">
    <property type="entry name" value="Sugar/inositol_transpt"/>
</dbReference>
<dbReference type="InterPro" id="IPR005829">
    <property type="entry name" value="Sugar_transporter_CS"/>
</dbReference>
<dbReference type="NCBIfam" id="TIGR00879">
    <property type="entry name" value="SP"/>
    <property type="match status" value="1"/>
</dbReference>
<dbReference type="PANTHER" id="PTHR48022:SF75">
    <property type="entry name" value="GALACTOSE TRANSPORTER-RELATED"/>
    <property type="match status" value="1"/>
</dbReference>
<dbReference type="PANTHER" id="PTHR48022">
    <property type="entry name" value="PLASTIDIC GLUCOSE TRANSPORTER 4"/>
    <property type="match status" value="1"/>
</dbReference>
<dbReference type="Pfam" id="PF00083">
    <property type="entry name" value="Sugar_tr"/>
    <property type="match status" value="1"/>
</dbReference>
<dbReference type="PRINTS" id="PR00171">
    <property type="entry name" value="SUGRTRNSPORT"/>
</dbReference>
<dbReference type="SUPFAM" id="SSF103473">
    <property type="entry name" value="MFS general substrate transporter"/>
    <property type="match status" value="1"/>
</dbReference>
<dbReference type="PROSITE" id="PS50850">
    <property type="entry name" value="MFS"/>
    <property type="match status" value="1"/>
</dbReference>
<dbReference type="PROSITE" id="PS00216">
    <property type="entry name" value="SUGAR_TRANSPORT_1"/>
    <property type="match status" value="1"/>
</dbReference>
<dbReference type="PROSITE" id="PS00217">
    <property type="entry name" value="SUGAR_TRANSPORT_2"/>
    <property type="match status" value="1"/>
</dbReference>
<organism>
    <name type="scientific">Saccharomyces cerevisiae (strain ATCC 204508 / S288c)</name>
    <name type="common">Baker's yeast</name>
    <dbReference type="NCBI Taxonomy" id="559292"/>
    <lineage>
        <taxon>Eukaryota</taxon>
        <taxon>Fungi</taxon>
        <taxon>Dikarya</taxon>
        <taxon>Ascomycota</taxon>
        <taxon>Saccharomycotina</taxon>
        <taxon>Saccharomycetes</taxon>
        <taxon>Saccharomycetales</taxon>
        <taxon>Saccharomycetaceae</taxon>
        <taxon>Saccharomyces</taxon>
    </lineage>
</organism>
<comment type="function">
    <text>High-affinity glucose transporter.</text>
</comment>
<comment type="subcellular location">
    <subcellularLocation>
        <location>Membrane</location>
        <topology>Multi-pass membrane protein</topology>
    </subcellularLocation>
</comment>
<comment type="similarity">
    <text evidence="3">Belongs to the major facilitator superfamily. Sugar transporter (TC 2.A.1.1) family.</text>
</comment>
<evidence type="ECO:0000255" key="1"/>
<evidence type="ECO:0000269" key="2">
    <source>
    </source>
</evidence>
<evidence type="ECO:0000305" key="3"/>
<gene>
    <name type="primary">HXT6</name>
    <name type="ordered locus">YDR343C</name>
    <name type="ORF">D9651.12</name>
</gene>
<name>HXT6_YEAST</name>
<proteinExistence type="evidence at protein level"/>